<feature type="chain" id="PRO_0000249667" description="N-acetylmuramic acid 6-phosphate etherase">
    <location>
        <begin position="1"/>
        <end position="311"/>
    </location>
</feature>
<feature type="domain" description="SIS" evidence="1">
    <location>
        <begin position="66"/>
        <end position="229"/>
    </location>
</feature>
<feature type="active site" description="Proton donor" evidence="1">
    <location>
        <position position="94"/>
    </location>
</feature>
<feature type="active site" evidence="1">
    <location>
        <position position="125"/>
    </location>
</feature>
<evidence type="ECO:0000255" key="1">
    <source>
        <dbReference type="HAMAP-Rule" id="MF_00068"/>
    </source>
</evidence>
<keyword id="KW-0119">Carbohydrate metabolism</keyword>
<keyword id="KW-0456">Lyase</keyword>
<keyword id="KW-1185">Reference proteome</keyword>
<dbReference type="EC" id="4.2.1.126" evidence="1"/>
<dbReference type="EMBL" id="AL939119">
    <property type="protein sequence ID" value="CAB93067.1"/>
    <property type="molecule type" value="Genomic_DNA"/>
</dbReference>
<dbReference type="RefSeq" id="NP_628479.1">
    <property type="nucleotide sequence ID" value="NC_003888.3"/>
</dbReference>
<dbReference type="RefSeq" id="WP_011029570.1">
    <property type="nucleotide sequence ID" value="NZ_VNID01000026.1"/>
</dbReference>
<dbReference type="SMR" id="Q9KXT4"/>
<dbReference type="STRING" id="100226.gene:17761952"/>
<dbReference type="PaxDb" id="100226-SCO4307"/>
<dbReference type="KEGG" id="sco:SCO4307"/>
<dbReference type="PATRIC" id="fig|100226.15.peg.4375"/>
<dbReference type="eggNOG" id="COG2103">
    <property type="taxonomic scope" value="Bacteria"/>
</dbReference>
<dbReference type="HOGENOM" id="CLU_049049_1_1_11"/>
<dbReference type="InParanoid" id="Q9KXT4"/>
<dbReference type="OrthoDB" id="9813395at2"/>
<dbReference type="PhylomeDB" id="Q9KXT4"/>
<dbReference type="UniPathway" id="UPA00342"/>
<dbReference type="Proteomes" id="UP000001973">
    <property type="component" value="Chromosome"/>
</dbReference>
<dbReference type="GO" id="GO:0097367">
    <property type="term" value="F:carbohydrate derivative binding"/>
    <property type="evidence" value="ECO:0007669"/>
    <property type="project" value="InterPro"/>
</dbReference>
<dbReference type="GO" id="GO:0016835">
    <property type="term" value="F:carbon-oxygen lyase activity"/>
    <property type="evidence" value="ECO:0000318"/>
    <property type="project" value="GO_Central"/>
</dbReference>
<dbReference type="GO" id="GO:0016803">
    <property type="term" value="F:ether hydrolase activity"/>
    <property type="evidence" value="ECO:0000318"/>
    <property type="project" value="GO_Central"/>
</dbReference>
<dbReference type="GO" id="GO:0046348">
    <property type="term" value="P:amino sugar catabolic process"/>
    <property type="evidence" value="ECO:0000318"/>
    <property type="project" value="GO_Central"/>
</dbReference>
<dbReference type="GO" id="GO:0097173">
    <property type="term" value="P:N-acetylmuramic acid catabolic process"/>
    <property type="evidence" value="ECO:0007669"/>
    <property type="project" value="UniProtKB-UniPathway"/>
</dbReference>
<dbReference type="GO" id="GO:0009254">
    <property type="term" value="P:peptidoglycan turnover"/>
    <property type="evidence" value="ECO:0000318"/>
    <property type="project" value="GO_Central"/>
</dbReference>
<dbReference type="CDD" id="cd05007">
    <property type="entry name" value="SIS_Etherase"/>
    <property type="match status" value="1"/>
</dbReference>
<dbReference type="FunFam" id="1.10.8.1080:FF:000001">
    <property type="entry name" value="N-acetylmuramic acid 6-phosphate etherase"/>
    <property type="match status" value="1"/>
</dbReference>
<dbReference type="FunFam" id="3.40.50.10490:FF:000014">
    <property type="entry name" value="N-acetylmuramic acid 6-phosphate etherase"/>
    <property type="match status" value="1"/>
</dbReference>
<dbReference type="Gene3D" id="1.10.8.1080">
    <property type="match status" value="1"/>
</dbReference>
<dbReference type="Gene3D" id="3.40.50.10490">
    <property type="entry name" value="Glucose-6-phosphate isomerase like protein, domain 1"/>
    <property type="match status" value="1"/>
</dbReference>
<dbReference type="HAMAP" id="MF_00068">
    <property type="entry name" value="MurQ"/>
    <property type="match status" value="1"/>
</dbReference>
<dbReference type="InterPro" id="IPR005488">
    <property type="entry name" value="Etherase_MurQ"/>
</dbReference>
<dbReference type="InterPro" id="IPR005486">
    <property type="entry name" value="Glucokinase_regulatory_CS"/>
</dbReference>
<dbReference type="InterPro" id="IPR040190">
    <property type="entry name" value="MURQ/GCKR"/>
</dbReference>
<dbReference type="InterPro" id="IPR001347">
    <property type="entry name" value="SIS_dom"/>
</dbReference>
<dbReference type="InterPro" id="IPR046348">
    <property type="entry name" value="SIS_dom_sf"/>
</dbReference>
<dbReference type="NCBIfam" id="TIGR00274">
    <property type="entry name" value="N-acetylmuramic acid 6-phosphate etherase"/>
    <property type="match status" value="1"/>
</dbReference>
<dbReference type="NCBIfam" id="NF003915">
    <property type="entry name" value="PRK05441.1"/>
    <property type="match status" value="1"/>
</dbReference>
<dbReference type="NCBIfam" id="NF009222">
    <property type="entry name" value="PRK12570.1"/>
    <property type="match status" value="1"/>
</dbReference>
<dbReference type="PANTHER" id="PTHR10088">
    <property type="entry name" value="GLUCOKINASE REGULATORY PROTEIN"/>
    <property type="match status" value="1"/>
</dbReference>
<dbReference type="PANTHER" id="PTHR10088:SF4">
    <property type="entry name" value="GLUCOKINASE REGULATORY PROTEIN"/>
    <property type="match status" value="1"/>
</dbReference>
<dbReference type="Pfam" id="PF22645">
    <property type="entry name" value="GKRP_SIS_N"/>
    <property type="match status" value="1"/>
</dbReference>
<dbReference type="SUPFAM" id="SSF53697">
    <property type="entry name" value="SIS domain"/>
    <property type="match status" value="1"/>
</dbReference>
<dbReference type="PROSITE" id="PS01272">
    <property type="entry name" value="GCKR"/>
    <property type="match status" value="1"/>
</dbReference>
<dbReference type="PROSITE" id="PS51464">
    <property type="entry name" value="SIS"/>
    <property type="match status" value="1"/>
</dbReference>
<sequence>MTSTPHHPDLRSQLETLTTEAFRPELAEIDQLPTLDIARLMNGEDATVPAAVAERLPEIAAAIDAVAVRMARGGRLIYAGAGTAGRLGVLDASECPPTFNTGPGQVVGLIAGGPDAMVTSIEGAEDSPELARADLDALALTADDTVVGVSASGRTPYAVGAVEYARSLGALTVGLACNRDSALAAAAEHGIEVVTGPELLTGSTRLKAGTAQKLVLNMLSTITMIRLGKTYGNLMVDVRASNEKLRARSRRIVALATGAADDDIERALTATDGEVKDAILVLLADVDGPTAARLLAESGGHLRAAMAAALG</sequence>
<name>MURQ_STRCO</name>
<proteinExistence type="inferred from homology"/>
<protein>
    <recommendedName>
        <fullName evidence="1">N-acetylmuramic acid 6-phosphate etherase</fullName>
        <shortName evidence="1">MurNAc-6-P etherase</shortName>
        <ecNumber evidence="1">4.2.1.126</ecNumber>
    </recommendedName>
    <alternativeName>
        <fullName evidence="1">N-acetylmuramic acid 6-phosphate hydrolase</fullName>
    </alternativeName>
    <alternativeName>
        <fullName evidence="1">N-acetylmuramic acid 6-phosphate lyase</fullName>
    </alternativeName>
</protein>
<reference key="1">
    <citation type="journal article" date="2002" name="Nature">
        <title>Complete genome sequence of the model actinomycete Streptomyces coelicolor A3(2).</title>
        <authorList>
            <person name="Bentley S.D."/>
            <person name="Chater K.F."/>
            <person name="Cerdeno-Tarraga A.-M."/>
            <person name="Challis G.L."/>
            <person name="Thomson N.R."/>
            <person name="James K.D."/>
            <person name="Harris D.E."/>
            <person name="Quail M.A."/>
            <person name="Kieser H."/>
            <person name="Harper D."/>
            <person name="Bateman A."/>
            <person name="Brown S."/>
            <person name="Chandra G."/>
            <person name="Chen C.W."/>
            <person name="Collins M."/>
            <person name="Cronin A."/>
            <person name="Fraser A."/>
            <person name="Goble A."/>
            <person name="Hidalgo J."/>
            <person name="Hornsby T."/>
            <person name="Howarth S."/>
            <person name="Huang C.-H."/>
            <person name="Kieser T."/>
            <person name="Larke L."/>
            <person name="Murphy L.D."/>
            <person name="Oliver K."/>
            <person name="O'Neil S."/>
            <person name="Rabbinowitsch E."/>
            <person name="Rajandream M.A."/>
            <person name="Rutherford K.M."/>
            <person name="Rutter S."/>
            <person name="Seeger K."/>
            <person name="Saunders D."/>
            <person name="Sharp S."/>
            <person name="Squares R."/>
            <person name="Squares S."/>
            <person name="Taylor K."/>
            <person name="Warren T."/>
            <person name="Wietzorrek A."/>
            <person name="Woodward J.R."/>
            <person name="Barrell B.G."/>
            <person name="Parkhill J."/>
            <person name="Hopwood D.A."/>
        </authorList>
    </citation>
    <scope>NUCLEOTIDE SEQUENCE [LARGE SCALE GENOMIC DNA]</scope>
    <source>
        <strain>ATCC BAA-471 / A3(2) / M145</strain>
    </source>
</reference>
<accession>Q9KXT4</accession>
<organism>
    <name type="scientific">Streptomyces coelicolor (strain ATCC BAA-471 / A3(2) / M145)</name>
    <dbReference type="NCBI Taxonomy" id="100226"/>
    <lineage>
        <taxon>Bacteria</taxon>
        <taxon>Bacillati</taxon>
        <taxon>Actinomycetota</taxon>
        <taxon>Actinomycetes</taxon>
        <taxon>Kitasatosporales</taxon>
        <taxon>Streptomycetaceae</taxon>
        <taxon>Streptomyces</taxon>
        <taxon>Streptomyces albidoflavus group</taxon>
    </lineage>
</organism>
<gene>
    <name evidence="1" type="primary">murQ</name>
    <name type="ordered locus">SCO4307</name>
    <name type="ORF">SCD95A.40c</name>
</gene>
<comment type="function">
    <text evidence="1">Specifically catalyzes the cleavage of the D-lactyl ether substituent of MurNAc 6-phosphate, producing GlcNAc 6-phosphate and D-lactate.</text>
</comment>
<comment type="catalytic activity">
    <reaction evidence="1">
        <text>N-acetyl-D-muramate 6-phosphate + H2O = N-acetyl-D-glucosamine 6-phosphate + (R)-lactate</text>
        <dbReference type="Rhea" id="RHEA:26410"/>
        <dbReference type="ChEBI" id="CHEBI:15377"/>
        <dbReference type="ChEBI" id="CHEBI:16004"/>
        <dbReference type="ChEBI" id="CHEBI:57513"/>
        <dbReference type="ChEBI" id="CHEBI:58722"/>
        <dbReference type="EC" id="4.2.1.126"/>
    </reaction>
</comment>
<comment type="pathway">
    <text evidence="1">Amino-sugar metabolism; N-acetylmuramate degradation.</text>
</comment>
<comment type="subunit">
    <text evidence="1">Homodimer.</text>
</comment>
<comment type="miscellaneous">
    <text evidence="1">A lyase-type mechanism (elimination/hydration) is suggested for the cleavage of the lactyl ether bond of MurNAc 6-phosphate, with the formation of an alpha,beta-unsaturated aldehyde intermediate with (E)-stereochemistry, followed by the syn addition of water to give product.</text>
</comment>
<comment type="similarity">
    <text evidence="1">Belongs to the GCKR-like family. MurNAc-6-P etherase subfamily.</text>
</comment>